<reference key="1">
    <citation type="journal article" date="2006" name="Proc. Natl. Acad. Sci. U.S.A.">
        <title>Comparative genomics of the lactic acid bacteria.</title>
        <authorList>
            <person name="Makarova K.S."/>
            <person name="Slesarev A."/>
            <person name="Wolf Y.I."/>
            <person name="Sorokin A."/>
            <person name="Mirkin B."/>
            <person name="Koonin E.V."/>
            <person name="Pavlov A."/>
            <person name="Pavlova N."/>
            <person name="Karamychev V."/>
            <person name="Polouchine N."/>
            <person name="Shakhova V."/>
            <person name="Grigoriev I."/>
            <person name="Lou Y."/>
            <person name="Rohksar D."/>
            <person name="Lucas S."/>
            <person name="Huang K."/>
            <person name="Goodstein D.M."/>
            <person name="Hawkins T."/>
            <person name="Plengvidhya V."/>
            <person name="Welker D."/>
            <person name="Hughes J."/>
            <person name="Goh Y."/>
            <person name="Benson A."/>
            <person name="Baldwin K."/>
            <person name="Lee J.-H."/>
            <person name="Diaz-Muniz I."/>
            <person name="Dosti B."/>
            <person name="Smeianov V."/>
            <person name="Wechter W."/>
            <person name="Barabote R."/>
            <person name="Lorca G."/>
            <person name="Altermann E."/>
            <person name="Barrangou R."/>
            <person name="Ganesan B."/>
            <person name="Xie Y."/>
            <person name="Rawsthorne H."/>
            <person name="Tamir D."/>
            <person name="Parker C."/>
            <person name="Breidt F."/>
            <person name="Broadbent J.R."/>
            <person name="Hutkins R."/>
            <person name="O'Sullivan D."/>
            <person name="Steele J."/>
            <person name="Unlu G."/>
            <person name="Saier M.H. Jr."/>
            <person name="Klaenhammer T."/>
            <person name="Richardson P."/>
            <person name="Kozyavkin S."/>
            <person name="Weimer B.C."/>
            <person name="Mills D.A."/>
        </authorList>
    </citation>
    <scope>NUCLEOTIDE SEQUENCE [LARGE SCALE GENOMIC DNA]</scope>
    <source>
        <strain>ATCC 334 / BCRC 17002 / CCUG 31169 / CIP 107868 / KCTC 3260 / NRRL B-441</strain>
    </source>
</reference>
<protein>
    <recommendedName>
        <fullName evidence="1">Bifunctional purine biosynthesis protein PurH</fullName>
    </recommendedName>
    <domain>
        <recommendedName>
            <fullName evidence="1">Phosphoribosylaminoimidazolecarboxamide formyltransferase</fullName>
            <ecNumber evidence="1">2.1.2.3</ecNumber>
        </recommendedName>
        <alternativeName>
            <fullName evidence="1">AICAR transformylase</fullName>
        </alternativeName>
    </domain>
    <domain>
        <recommendedName>
            <fullName evidence="1">IMP cyclohydrolase</fullName>
            <ecNumber evidence="1">3.5.4.10</ecNumber>
        </recommendedName>
        <alternativeName>
            <fullName evidence="1">ATIC</fullName>
        </alternativeName>
        <alternativeName>
            <fullName evidence="1">IMP synthase</fullName>
        </alternativeName>
        <alternativeName>
            <fullName evidence="1">Inosinicase</fullName>
        </alternativeName>
    </domain>
</protein>
<organism>
    <name type="scientific">Lacticaseibacillus paracasei (strain ATCC 334 / BCRC 17002 / CCUG 31169 / CIP 107868 / KCTC 3260 / NRRL B-441)</name>
    <name type="common">Lactobacillus paracasei</name>
    <dbReference type="NCBI Taxonomy" id="321967"/>
    <lineage>
        <taxon>Bacteria</taxon>
        <taxon>Bacillati</taxon>
        <taxon>Bacillota</taxon>
        <taxon>Bacilli</taxon>
        <taxon>Lactobacillales</taxon>
        <taxon>Lactobacillaceae</taxon>
        <taxon>Lacticaseibacillus</taxon>
    </lineage>
</organism>
<name>PUR9_LACP3</name>
<accession>Q037V3</accession>
<feature type="chain" id="PRO_1000018897" description="Bifunctional purine biosynthesis protein PurH">
    <location>
        <begin position="1"/>
        <end position="507"/>
    </location>
</feature>
<feature type="domain" description="MGS-like" evidence="2">
    <location>
        <begin position="1"/>
        <end position="144"/>
    </location>
</feature>
<sequence length="507" mass="54699">MKRALLSVSDKTGLVSFAKGLIDRGFELVSTGGTHRELAAAGIAVTSVEEVTGFPEMLDGRVKTLHPKIHAGILARRDDPAHMEALADHDIQPVDLVCVNLYPFAATIKRPDVTRAEAIEQIDIGGPSALRAAAKNSDSVWAVVDPADYEAVLTGLDQDDAHLRQKLAAKVFAITAAYDAQIVHYLDPEPFPEHFTPTYTKRQDLRYGENSHQQAAFYVEPDPNPTSLAAAKQLHGKELSYNNIKDADAALAMLREFSEPAVVAVKHMNPCGIGLGKTIEGAWDKAYAADPMSIFGGIIALNRPVDLATAEKMHKLFLEIIMAPAFDDDAYAVLAKKKNVRLLTINTADTPAELGTETTAIYGGLLIQARDNQTETPADLTVVTTVKPTDEQLKALAFAQTVVKHVKSNAIVVAQADQTLGIGAGQMNRIGSVELALTQAQQNDNFAGAVMASDAFFPMDDCVDYAAKHDIKAIIQPGGSIRDKDSIEKANQYGIAMVTTGVRHFRH</sequence>
<evidence type="ECO:0000255" key="1">
    <source>
        <dbReference type="HAMAP-Rule" id="MF_00139"/>
    </source>
</evidence>
<evidence type="ECO:0000255" key="2">
    <source>
        <dbReference type="PROSITE-ProRule" id="PRU01202"/>
    </source>
</evidence>
<comment type="catalytic activity">
    <reaction evidence="1">
        <text>(6R)-10-formyltetrahydrofolate + 5-amino-1-(5-phospho-beta-D-ribosyl)imidazole-4-carboxamide = 5-formamido-1-(5-phospho-D-ribosyl)imidazole-4-carboxamide + (6S)-5,6,7,8-tetrahydrofolate</text>
        <dbReference type="Rhea" id="RHEA:22192"/>
        <dbReference type="ChEBI" id="CHEBI:57453"/>
        <dbReference type="ChEBI" id="CHEBI:58467"/>
        <dbReference type="ChEBI" id="CHEBI:58475"/>
        <dbReference type="ChEBI" id="CHEBI:195366"/>
        <dbReference type="EC" id="2.1.2.3"/>
    </reaction>
</comment>
<comment type="catalytic activity">
    <reaction evidence="1">
        <text>IMP + H2O = 5-formamido-1-(5-phospho-D-ribosyl)imidazole-4-carboxamide</text>
        <dbReference type="Rhea" id="RHEA:18445"/>
        <dbReference type="ChEBI" id="CHEBI:15377"/>
        <dbReference type="ChEBI" id="CHEBI:58053"/>
        <dbReference type="ChEBI" id="CHEBI:58467"/>
        <dbReference type="EC" id="3.5.4.10"/>
    </reaction>
</comment>
<comment type="pathway">
    <text evidence="1">Purine metabolism; IMP biosynthesis via de novo pathway; 5-formamido-1-(5-phospho-D-ribosyl)imidazole-4-carboxamide from 5-amino-1-(5-phospho-D-ribosyl)imidazole-4-carboxamide (10-formyl THF route): step 1/1.</text>
</comment>
<comment type="pathway">
    <text evidence="1">Purine metabolism; IMP biosynthesis via de novo pathway; IMP from 5-formamido-1-(5-phospho-D-ribosyl)imidazole-4-carboxamide: step 1/1.</text>
</comment>
<comment type="domain">
    <text evidence="1">The IMP cyclohydrolase activity resides in the N-terminal region.</text>
</comment>
<comment type="similarity">
    <text evidence="1">Belongs to the PurH family.</text>
</comment>
<keyword id="KW-0378">Hydrolase</keyword>
<keyword id="KW-0511">Multifunctional enzyme</keyword>
<keyword id="KW-0658">Purine biosynthesis</keyword>
<keyword id="KW-1185">Reference proteome</keyword>
<keyword id="KW-0808">Transferase</keyword>
<dbReference type="EC" id="2.1.2.3" evidence="1"/>
<dbReference type="EC" id="3.5.4.10" evidence="1"/>
<dbReference type="EMBL" id="CP000423">
    <property type="protein sequence ID" value="ABJ70519.1"/>
    <property type="molecule type" value="Genomic_DNA"/>
</dbReference>
<dbReference type="RefSeq" id="WP_011674595.1">
    <property type="nucleotide sequence ID" value="NC_008526.1"/>
</dbReference>
<dbReference type="RefSeq" id="YP_806961.1">
    <property type="nucleotide sequence ID" value="NC_008526.1"/>
</dbReference>
<dbReference type="SMR" id="Q037V3"/>
<dbReference type="STRING" id="321967.LSEI_1747"/>
<dbReference type="PaxDb" id="321967-LSEI_1747"/>
<dbReference type="KEGG" id="lca:LSEI_1747"/>
<dbReference type="PATRIC" id="fig|321967.11.peg.1726"/>
<dbReference type="HOGENOM" id="CLU_016316_5_2_9"/>
<dbReference type="UniPathway" id="UPA00074">
    <property type="reaction ID" value="UER00133"/>
</dbReference>
<dbReference type="UniPathway" id="UPA00074">
    <property type="reaction ID" value="UER00135"/>
</dbReference>
<dbReference type="Proteomes" id="UP000001651">
    <property type="component" value="Chromosome"/>
</dbReference>
<dbReference type="GO" id="GO:0005829">
    <property type="term" value="C:cytosol"/>
    <property type="evidence" value="ECO:0007669"/>
    <property type="project" value="TreeGrafter"/>
</dbReference>
<dbReference type="GO" id="GO:0003937">
    <property type="term" value="F:IMP cyclohydrolase activity"/>
    <property type="evidence" value="ECO:0007669"/>
    <property type="project" value="UniProtKB-UniRule"/>
</dbReference>
<dbReference type="GO" id="GO:0004643">
    <property type="term" value="F:phosphoribosylaminoimidazolecarboxamide formyltransferase activity"/>
    <property type="evidence" value="ECO:0007669"/>
    <property type="project" value="UniProtKB-UniRule"/>
</dbReference>
<dbReference type="GO" id="GO:0006189">
    <property type="term" value="P:'de novo' IMP biosynthetic process"/>
    <property type="evidence" value="ECO:0007669"/>
    <property type="project" value="UniProtKB-UniRule"/>
</dbReference>
<dbReference type="CDD" id="cd01421">
    <property type="entry name" value="IMPCH"/>
    <property type="match status" value="1"/>
</dbReference>
<dbReference type="FunFam" id="3.40.140.20:FF:000001">
    <property type="entry name" value="Bifunctional purine biosynthesis protein PurH"/>
    <property type="match status" value="1"/>
</dbReference>
<dbReference type="FunFam" id="3.40.140.20:FF:000002">
    <property type="entry name" value="Bifunctional purine biosynthesis protein PurH"/>
    <property type="match status" value="1"/>
</dbReference>
<dbReference type="FunFam" id="3.40.50.1380:FF:000001">
    <property type="entry name" value="Bifunctional purine biosynthesis protein PurH"/>
    <property type="match status" value="1"/>
</dbReference>
<dbReference type="Gene3D" id="3.40.140.20">
    <property type="match status" value="2"/>
</dbReference>
<dbReference type="Gene3D" id="3.40.50.1380">
    <property type="entry name" value="Methylglyoxal synthase-like domain"/>
    <property type="match status" value="1"/>
</dbReference>
<dbReference type="HAMAP" id="MF_00139">
    <property type="entry name" value="PurH"/>
    <property type="match status" value="1"/>
</dbReference>
<dbReference type="InterPro" id="IPR024051">
    <property type="entry name" value="AICAR_Tfase_dup_dom_sf"/>
</dbReference>
<dbReference type="InterPro" id="IPR016193">
    <property type="entry name" value="Cytidine_deaminase-like"/>
</dbReference>
<dbReference type="InterPro" id="IPR011607">
    <property type="entry name" value="MGS-like_dom"/>
</dbReference>
<dbReference type="InterPro" id="IPR036914">
    <property type="entry name" value="MGS-like_dom_sf"/>
</dbReference>
<dbReference type="InterPro" id="IPR002695">
    <property type="entry name" value="PurH-like"/>
</dbReference>
<dbReference type="NCBIfam" id="NF002049">
    <property type="entry name" value="PRK00881.1"/>
    <property type="match status" value="1"/>
</dbReference>
<dbReference type="NCBIfam" id="TIGR00355">
    <property type="entry name" value="purH"/>
    <property type="match status" value="1"/>
</dbReference>
<dbReference type="PANTHER" id="PTHR11692:SF0">
    <property type="entry name" value="BIFUNCTIONAL PURINE BIOSYNTHESIS PROTEIN ATIC"/>
    <property type="match status" value="1"/>
</dbReference>
<dbReference type="PANTHER" id="PTHR11692">
    <property type="entry name" value="BIFUNCTIONAL PURINE BIOSYNTHESIS PROTEIN PURH"/>
    <property type="match status" value="1"/>
</dbReference>
<dbReference type="Pfam" id="PF01808">
    <property type="entry name" value="AICARFT_IMPCHas"/>
    <property type="match status" value="1"/>
</dbReference>
<dbReference type="Pfam" id="PF02142">
    <property type="entry name" value="MGS"/>
    <property type="match status" value="1"/>
</dbReference>
<dbReference type="PIRSF" id="PIRSF000414">
    <property type="entry name" value="AICARFT_IMPCHas"/>
    <property type="match status" value="1"/>
</dbReference>
<dbReference type="SMART" id="SM00798">
    <property type="entry name" value="AICARFT_IMPCHas"/>
    <property type="match status" value="1"/>
</dbReference>
<dbReference type="SMART" id="SM00851">
    <property type="entry name" value="MGS"/>
    <property type="match status" value="1"/>
</dbReference>
<dbReference type="SUPFAM" id="SSF53927">
    <property type="entry name" value="Cytidine deaminase-like"/>
    <property type="match status" value="1"/>
</dbReference>
<dbReference type="SUPFAM" id="SSF52335">
    <property type="entry name" value="Methylglyoxal synthase-like"/>
    <property type="match status" value="1"/>
</dbReference>
<dbReference type="PROSITE" id="PS51855">
    <property type="entry name" value="MGS"/>
    <property type="match status" value="1"/>
</dbReference>
<gene>
    <name evidence="1" type="primary">purH</name>
    <name type="ordered locus">LSEI_1747</name>
</gene>
<proteinExistence type="inferred from homology"/>